<gene>
    <name evidence="6 8" type="primary">TPRX1</name>
</gene>
<feature type="chain" id="PRO_0000285591" description="Tetra-peptide repeat homeobox protein 1">
    <location>
        <begin position="1"/>
        <end position="411"/>
    </location>
</feature>
<feature type="DNA-binding region" description="Homeobox" evidence="1">
    <location>
        <begin position="3"/>
        <end position="24"/>
    </location>
</feature>
<feature type="region of interest" description="Disordered" evidence="2">
    <location>
        <begin position="20"/>
        <end position="63"/>
    </location>
</feature>
<feature type="region of interest" description="Disordered" evidence="2">
    <location>
        <begin position="88"/>
        <end position="246"/>
    </location>
</feature>
<feature type="region of interest" description="Disordered" evidence="2">
    <location>
        <begin position="286"/>
        <end position="340"/>
    </location>
</feature>
<feature type="region of interest" description="Disordered" evidence="2">
    <location>
        <begin position="363"/>
        <end position="411"/>
    </location>
</feature>
<feature type="compositionally biased region" description="Low complexity" evidence="2">
    <location>
        <begin position="27"/>
        <end position="55"/>
    </location>
</feature>
<feature type="compositionally biased region" description="Pro residues" evidence="2">
    <location>
        <begin position="95"/>
        <end position="139"/>
    </location>
</feature>
<feature type="compositionally biased region" description="Pro residues" evidence="2">
    <location>
        <begin position="149"/>
        <end position="246"/>
    </location>
</feature>
<feature type="compositionally biased region" description="Low complexity" evidence="2">
    <location>
        <begin position="295"/>
        <end position="307"/>
    </location>
</feature>
<feature type="compositionally biased region" description="Pro residues" evidence="2">
    <location>
        <begin position="319"/>
        <end position="335"/>
    </location>
</feature>
<feature type="compositionally biased region" description="Polar residues" evidence="2">
    <location>
        <begin position="366"/>
        <end position="376"/>
    </location>
</feature>
<feature type="compositionally biased region" description="Polar residues" evidence="2">
    <location>
        <begin position="388"/>
        <end position="402"/>
    </location>
</feature>
<feature type="splice variant" id="VSP_027444" description="In isoform 2." evidence="5">
    <location>
        <begin position="206"/>
        <end position="209"/>
    </location>
</feature>
<feature type="sequence conflict" description="In Ref. 1; BAC05130." evidence="7" ref="1">
    <original>P</original>
    <variation>L</variation>
    <location>
        <position position="206"/>
    </location>
</feature>
<feature type="sequence conflict" description="In Ref. 1; BAC05130." evidence="7" ref="1">
    <original>P</original>
    <variation>L</variation>
    <location>
        <position position="304"/>
    </location>
</feature>
<feature type="sequence conflict" description="In Ref. 3; AAI41864." evidence="7" ref="3">
    <original>A</original>
    <variation>V</variation>
    <location>
        <position position="329"/>
    </location>
</feature>
<dbReference type="EMBL" id="AK097640">
    <property type="protein sequence ID" value="BAC05130.1"/>
    <property type="molecule type" value="mRNA"/>
</dbReference>
<dbReference type="EMBL" id="AC008745">
    <property type="status" value="NOT_ANNOTATED_CDS"/>
    <property type="molecule type" value="Genomic_DNA"/>
</dbReference>
<dbReference type="EMBL" id="BC137501">
    <property type="protein sequence ID" value="AAI37502.1"/>
    <property type="molecule type" value="mRNA"/>
</dbReference>
<dbReference type="EMBL" id="BC141863">
    <property type="protein sequence ID" value="AAI41864.1"/>
    <property type="molecule type" value="mRNA"/>
</dbReference>
<dbReference type="RefSeq" id="NP_940881.2">
    <property type="nucleotide sequence ID" value="NM_198479.2"/>
</dbReference>
<dbReference type="SMR" id="Q8N7U7"/>
<dbReference type="BioGRID" id="129840">
    <property type="interactions" value="20"/>
</dbReference>
<dbReference type="IntAct" id="Q8N7U7">
    <property type="interactions" value="15"/>
</dbReference>
<dbReference type="STRING" id="9606.ENSP00000323455"/>
<dbReference type="iPTMnet" id="Q8N7U7"/>
<dbReference type="PhosphoSitePlus" id="Q8N7U7"/>
<dbReference type="BioMuta" id="TPRX1"/>
<dbReference type="DMDM" id="269849733"/>
<dbReference type="MassIVE" id="Q8N7U7"/>
<dbReference type="PaxDb" id="9606-ENSP00000323455"/>
<dbReference type="Antibodypedia" id="31633">
    <property type="antibodies" value="94 antibodies from 21 providers"/>
</dbReference>
<dbReference type="DNASU" id="284355"/>
<dbReference type="GeneID" id="284355"/>
<dbReference type="KEGG" id="hsa:284355"/>
<dbReference type="UCSC" id="uc002php.3">
    <molecule id="Q8N7U7-1"/>
    <property type="organism name" value="human"/>
</dbReference>
<dbReference type="AGR" id="HGNC:32174"/>
<dbReference type="CTD" id="284355"/>
<dbReference type="GeneCards" id="TPRX1"/>
<dbReference type="HGNC" id="HGNC:32174">
    <property type="gene designation" value="TPRX1"/>
</dbReference>
<dbReference type="MIM" id="611166">
    <property type="type" value="gene"/>
</dbReference>
<dbReference type="neXtProt" id="NX_Q8N7U7"/>
<dbReference type="PharmGKB" id="PA142670706"/>
<dbReference type="VEuPathDB" id="HostDB:ENSG00000178928"/>
<dbReference type="eggNOG" id="KOG2251">
    <property type="taxonomic scope" value="Eukaryota"/>
</dbReference>
<dbReference type="HOGENOM" id="CLU_055641_0_0_1"/>
<dbReference type="InParanoid" id="Q8N7U7"/>
<dbReference type="OMA" id="KDSGSQY"/>
<dbReference type="OrthoDB" id="9539689at2759"/>
<dbReference type="PAN-GO" id="Q8N7U7">
    <property type="GO annotations" value="4 GO annotations based on evolutionary models"/>
</dbReference>
<dbReference type="PathwayCommons" id="Q8N7U7"/>
<dbReference type="Reactome" id="R-HSA-9819196">
    <property type="pathway name" value="Zygotic genome activation (ZGA)"/>
</dbReference>
<dbReference type="SignaLink" id="Q8N7U7"/>
<dbReference type="BioGRID-ORCS" id="284355">
    <property type="hits" value="6 hits in 1147 CRISPR screens"/>
</dbReference>
<dbReference type="GenomeRNAi" id="284355"/>
<dbReference type="Pharos" id="Q8N7U7">
    <property type="development level" value="Tbio"/>
</dbReference>
<dbReference type="PRO" id="PR:Q8N7U7"/>
<dbReference type="Proteomes" id="UP000005640">
    <property type="component" value="Chromosome 19"/>
</dbReference>
<dbReference type="RNAct" id="Q8N7U7">
    <property type="molecule type" value="protein"/>
</dbReference>
<dbReference type="Bgee" id="ENSG00000178928">
    <property type="expression patterns" value="Expressed in primordial germ cell in gonad and 4 other cell types or tissues"/>
</dbReference>
<dbReference type="ExpressionAtlas" id="Q8N7U7">
    <property type="expression patterns" value="baseline and differential"/>
</dbReference>
<dbReference type="GO" id="GO:0000785">
    <property type="term" value="C:chromatin"/>
    <property type="evidence" value="ECO:0000247"/>
    <property type="project" value="NTNU_SB"/>
</dbReference>
<dbReference type="GO" id="GO:0005654">
    <property type="term" value="C:nucleoplasm"/>
    <property type="evidence" value="ECO:0000304"/>
    <property type="project" value="Reactome"/>
</dbReference>
<dbReference type="GO" id="GO:0003677">
    <property type="term" value="F:DNA binding"/>
    <property type="evidence" value="ECO:0007669"/>
    <property type="project" value="UniProtKB-KW"/>
</dbReference>
<dbReference type="GO" id="GO:0000981">
    <property type="term" value="F:DNA-binding transcription factor activity, RNA polymerase II-specific"/>
    <property type="evidence" value="ECO:0000314"/>
    <property type="project" value="UniProtKB"/>
</dbReference>
<dbReference type="GO" id="GO:0160021">
    <property type="term" value="P:maternal-to-zygotic transition of gene expression"/>
    <property type="evidence" value="ECO:0000314"/>
    <property type="project" value="UniProtKB"/>
</dbReference>
<dbReference type="CDD" id="cd00086">
    <property type="entry name" value="homeodomain"/>
    <property type="match status" value="1"/>
</dbReference>
<dbReference type="InterPro" id="IPR001356">
    <property type="entry name" value="HD"/>
</dbReference>
<dbReference type="InterPro" id="IPR009057">
    <property type="entry name" value="Homeodomain-like_sf"/>
</dbReference>
<dbReference type="PANTHER" id="PTHR45793">
    <property type="entry name" value="HOMEOBOX PROTEIN"/>
    <property type="match status" value="1"/>
</dbReference>
<dbReference type="PANTHER" id="PTHR45793:SF12">
    <property type="entry name" value="TETRAPEPTIDE REPEAT HOMEOBOX 1"/>
    <property type="match status" value="1"/>
</dbReference>
<dbReference type="SUPFAM" id="SSF46689">
    <property type="entry name" value="Homeodomain-like"/>
    <property type="match status" value="1"/>
</dbReference>
<dbReference type="PROSITE" id="PS50071">
    <property type="entry name" value="HOMEOBOX_2"/>
    <property type="match status" value="1"/>
</dbReference>
<organism>
    <name type="scientific">Homo sapiens</name>
    <name type="common">Human</name>
    <dbReference type="NCBI Taxonomy" id="9606"/>
    <lineage>
        <taxon>Eukaryota</taxon>
        <taxon>Metazoa</taxon>
        <taxon>Chordata</taxon>
        <taxon>Craniata</taxon>
        <taxon>Vertebrata</taxon>
        <taxon>Euteleostomi</taxon>
        <taxon>Mammalia</taxon>
        <taxon>Eutheria</taxon>
        <taxon>Euarchontoglires</taxon>
        <taxon>Primates</taxon>
        <taxon>Haplorrhini</taxon>
        <taxon>Catarrhini</taxon>
        <taxon>Hominidae</taxon>
        <taxon>Homo</taxon>
    </lineage>
</organism>
<accession>Q8N7U7</accession>
<accession>A5D8Y3</accession>
<accession>B2RPL5</accession>
<keyword id="KW-0025">Alternative splicing</keyword>
<keyword id="KW-0217">Developmental protein</keyword>
<keyword id="KW-0238">DNA-binding</keyword>
<keyword id="KW-0371">Homeobox</keyword>
<keyword id="KW-0539">Nucleus</keyword>
<keyword id="KW-1267">Proteomics identification</keyword>
<keyword id="KW-1185">Reference proteome</keyword>
<keyword id="KW-0804">Transcription</keyword>
<keyword id="KW-0805">Transcription regulation</keyword>
<protein>
    <recommendedName>
        <fullName evidence="7">Tetra-peptide repeat homeobox protein 1</fullName>
    </recommendedName>
</protein>
<evidence type="ECO:0000255" key="1">
    <source>
        <dbReference type="PROSITE-ProRule" id="PRU00108"/>
    </source>
</evidence>
<evidence type="ECO:0000256" key="2">
    <source>
        <dbReference type="SAM" id="MobiDB-lite"/>
    </source>
</evidence>
<evidence type="ECO:0000269" key="3">
    <source>
    </source>
</evidence>
<evidence type="ECO:0000269" key="4">
    <source>
    </source>
</evidence>
<evidence type="ECO:0000303" key="5">
    <source>
    </source>
</evidence>
<evidence type="ECO:0000303" key="6">
    <source>
    </source>
</evidence>
<evidence type="ECO:0000305" key="7"/>
<evidence type="ECO:0000312" key="8">
    <source>
        <dbReference type="HGNC" id="HGNC:32174"/>
    </source>
</evidence>
<reference key="1">
    <citation type="journal article" date="2004" name="Nat. Genet.">
        <title>Complete sequencing and characterization of 21,243 full-length human cDNAs.</title>
        <authorList>
            <person name="Ota T."/>
            <person name="Suzuki Y."/>
            <person name="Nishikawa T."/>
            <person name="Otsuki T."/>
            <person name="Sugiyama T."/>
            <person name="Irie R."/>
            <person name="Wakamatsu A."/>
            <person name="Hayashi K."/>
            <person name="Sato H."/>
            <person name="Nagai K."/>
            <person name="Kimura K."/>
            <person name="Makita H."/>
            <person name="Sekine M."/>
            <person name="Obayashi M."/>
            <person name="Nishi T."/>
            <person name="Shibahara T."/>
            <person name="Tanaka T."/>
            <person name="Ishii S."/>
            <person name="Yamamoto J."/>
            <person name="Saito K."/>
            <person name="Kawai Y."/>
            <person name="Isono Y."/>
            <person name="Nakamura Y."/>
            <person name="Nagahari K."/>
            <person name="Murakami K."/>
            <person name="Yasuda T."/>
            <person name="Iwayanagi T."/>
            <person name="Wagatsuma M."/>
            <person name="Shiratori A."/>
            <person name="Sudo H."/>
            <person name="Hosoiri T."/>
            <person name="Kaku Y."/>
            <person name="Kodaira H."/>
            <person name="Kondo H."/>
            <person name="Sugawara M."/>
            <person name="Takahashi M."/>
            <person name="Kanda K."/>
            <person name="Yokoi T."/>
            <person name="Furuya T."/>
            <person name="Kikkawa E."/>
            <person name="Omura Y."/>
            <person name="Abe K."/>
            <person name="Kamihara K."/>
            <person name="Katsuta N."/>
            <person name="Sato K."/>
            <person name="Tanikawa M."/>
            <person name="Yamazaki M."/>
            <person name="Ninomiya K."/>
            <person name="Ishibashi T."/>
            <person name="Yamashita H."/>
            <person name="Murakawa K."/>
            <person name="Fujimori K."/>
            <person name="Tanai H."/>
            <person name="Kimata M."/>
            <person name="Watanabe M."/>
            <person name="Hiraoka S."/>
            <person name="Chiba Y."/>
            <person name="Ishida S."/>
            <person name="Ono Y."/>
            <person name="Takiguchi S."/>
            <person name="Watanabe S."/>
            <person name="Yosida M."/>
            <person name="Hotuta T."/>
            <person name="Kusano J."/>
            <person name="Kanehori K."/>
            <person name="Takahashi-Fujii A."/>
            <person name="Hara H."/>
            <person name="Tanase T.-O."/>
            <person name="Nomura Y."/>
            <person name="Togiya S."/>
            <person name="Komai F."/>
            <person name="Hara R."/>
            <person name="Takeuchi K."/>
            <person name="Arita M."/>
            <person name="Imose N."/>
            <person name="Musashino K."/>
            <person name="Yuuki H."/>
            <person name="Oshima A."/>
            <person name="Sasaki N."/>
            <person name="Aotsuka S."/>
            <person name="Yoshikawa Y."/>
            <person name="Matsunawa H."/>
            <person name="Ichihara T."/>
            <person name="Shiohata N."/>
            <person name="Sano S."/>
            <person name="Moriya S."/>
            <person name="Momiyama H."/>
            <person name="Satoh N."/>
            <person name="Takami S."/>
            <person name="Terashima Y."/>
            <person name="Suzuki O."/>
            <person name="Nakagawa S."/>
            <person name="Senoh A."/>
            <person name="Mizoguchi H."/>
            <person name="Goto Y."/>
            <person name="Shimizu F."/>
            <person name="Wakebe H."/>
            <person name="Hishigaki H."/>
            <person name="Watanabe T."/>
            <person name="Sugiyama A."/>
            <person name="Takemoto M."/>
            <person name="Kawakami B."/>
            <person name="Yamazaki M."/>
            <person name="Watanabe K."/>
            <person name="Kumagai A."/>
            <person name="Itakura S."/>
            <person name="Fukuzumi Y."/>
            <person name="Fujimori Y."/>
            <person name="Komiyama M."/>
            <person name="Tashiro H."/>
            <person name="Tanigami A."/>
            <person name="Fujiwara T."/>
            <person name="Ono T."/>
            <person name="Yamada K."/>
            <person name="Fujii Y."/>
            <person name="Ozaki K."/>
            <person name="Hirao M."/>
            <person name="Ohmori Y."/>
            <person name="Kawabata A."/>
            <person name="Hikiji T."/>
            <person name="Kobatake N."/>
            <person name="Inagaki H."/>
            <person name="Ikema Y."/>
            <person name="Okamoto S."/>
            <person name="Okitani R."/>
            <person name="Kawakami T."/>
            <person name="Noguchi S."/>
            <person name="Itoh T."/>
            <person name="Shigeta K."/>
            <person name="Senba T."/>
            <person name="Matsumura K."/>
            <person name="Nakajima Y."/>
            <person name="Mizuno T."/>
            <person name="Morinaga M."/>
            <person name="Sasaki M."/>
            <person name="Togashi T."/>
            <person name="Oyama M."/>
            <person name="Hata H."/>
            <person name="Watanabe M."/>
            <person name="Komatsu T."/>
            <person name="Mizushima-Sugano J."/>
            <person name="Satoh T."/>
            <person name="Shirai Y."/>
            <person name="Takahashi Y."/>
            <person name="Nakagawa K."/>
            <person name="Okumura K."/>
            <person name="Nagase T."/>
            <person name="Nomura N."/>
            <person name="Kikuchi H."/>
            <person name="Masuho Y."/>
            <person name="Yamashita R."/>
            <person name="Nakai K."/>
            <person name="Yada T."/>
            <person name="Nakamura Y."/>
            <person name="Ohara O."/>
            <person name="Isogai T."/>
            <person name="Sugano S."/>
        </authorList>
    </citation>
    <scope>NUCLEOTIDE SEQUENCE [LARGE SCALE MRNA] (ISOFORM 1)</scope>
    <source>
        <tissue>Testis</tissue>
    </source>
</reference>
<reference key="2">
    <citation type="journal article" date="2004" name="Nature">
        <title>The DNA sequence and biology of human chromosome 19.</title>
        <authorList>
            <person name="Grimwood J."/>
            <person name="Gordon L.A."/>
            <person name="Olsen A.S."/>
            <person name="Terry A."/>
            <person name="Schmutz J."/>
            <person name="Lamerdin J.E."/>
            <person name="Hellsten U."/>
            <person name="Goodstein D."/>
            <person name="Couronne O."/>
            <person name="Tran-Gyamfi M."/>
            <person name="Aerts A."/>
            <person name="Altherr M."/>
            <person name="Ashworth L."/>
            <person name="Bajorek E."/>
            <person name="Black S."/>
            <person name="Branscomb E."/>
            <person name="Caenepeel S."/>
            <person name="Carrano A.V."/>
            <person name="Caoile C."/>
            <person name="Chan Y.M."/>
            <person name="Christensen M."/>
            <person name="Cleland C.A."/>
            <person name="Copeland A."/>
            <person name="Dalin E."/>
            <person name="Dehal P."/>
            <person name="Denys M."/>
            <person name="Detter J.C."/>
            <person name="Escobar J."/>
            <person name="Flowers D."/>
            <person name="Fotopulos D."/>
            <person name="Garcia C."/>
            <person name="Georgescu A.M."/>
            <person name="Glavina T."/>
            <person name="Gomez M."/>
            <person name="Gonzales E."/>
            <person name="Groza M."/>
            <person name="Hammon N."/>
            <person name="Hawkins T."/>
            <person name="Haydu L."/>
            <person name="Ho I."/>
            <person name="Huang W."/>
            <person name="Israni S."/>
            <person name="Jett J."/>
            <person name="Kadner K."/>
            <person name="Kimball H."/>
            <person name="Kobayashi A."/>
            <person name="Larionov V."/>
            <person name="Leem S.-H."/>
            <person name="Lopez F."/>
            <person name="Lou Y."/>
            <person name="Lowry S."/>
            <person name="Malfatti S."/>
            <person name="Martinez D."/>
            <person name="McCready P.M."/>
            <person name="Medina C."/>
            <person name="Morgan J."/>
            <person name="Nelson K."/>
            <person name="Nolan M."/>
            <person name="Ovcharenko I."/>
            <person name="Pitluck S."/>
            <person name="Pollard M."/>
            <person name="Popkie A.P."/>
            <person name="Predki P."/>
            <person name="Quan G."/>
            <person name="Ramirez L."/>
            <person name="Rash S."/>
            <person name="Retterer J."/>
            <person name="Rodriguez A."/>
            <person name="Rogers S."/>
            <person name="Salamov A."/>
            <person name="Salazar A."/>
            <person name="She X."/>
            <person name="Smith D."/>
            <person name="Slezak T."/>
            <person name="Solovyev V."/>
            <person name="Thayer N."/>
            <person name="Tice H."/>
            <person name="Tsai M."/>
            <person name="Ustaszewska A."/>
            <person name="Vo N."/>
            <person name="Wagner M."/>
            <person name="Wheeler J."/>
            <person name="Wu K."/>
            <person name="Xie G."/>
            <person name="Yang J."/>
            <person name="Dubchak I."/>
            <person name="Furey T.S."/>
            <person name="DeJong P."/>
            <person name="Dickson M."/>
            <person name="Gordon D."/>
            <person name="Eichler E.E."/>
            <person name="Pennacchio L.A."/>
            <person name="Richardson P."/>
            <person name="Stubbs L."/>
            <person name="Rokhsar D.S."/>
            <person name="Myers R.M."/>
            <person name="Rubin E.M."/>
            <person name="Lucas S.M."/>
        </authorList>
    </citation>
    <scope>NUCLEOTIDE SEQUENCE [LARGE SCALE GENOMIC DNA]</scope>
</reference>
<reference key="3">
    <citation type="journal article" date="2004" name="Genome Res.">
        <title>The status, quality, and expansion of the NIH full-length cDNA project: the Mammalian Gene Collection (MGC).</title>
        <authorList>
            <consortium name="The MGC Project Team"/>
        </authorList>
    </citation>
    <scope>NUCLEOTIDE SEQUENCE [LARGE SCALE MRNA] (ISOFORMS 1 AND 2)</scope>
</reference>
<reference key="4">
    <citation type="journal article" date="2022" name="Nature">
        <title>Rolling back human pluripotent stem cells to an eight-cell embryo-like stage.</title>
        <authorList>
            <person name="Mazid M.A."/>
            <person name="Ward C."/>
            <person name="Luo Z."/>
            <person name="Liu C."/>
            <person name="Li Y."/>
            <person name="Lai Y."/>
            <person name="Wu L."/>
            <person name="Li J."/>
            <person name="Jia W."/>
            <person name="Jiang Y."/>
            <person name="Liu H."/>
            <person name="Fu L."/>
            <person name="Yang Y."/>
            <person name="Ibanez D.P."/>
            <person name="Lai J."/>
            <person name="Wei X."/>
            <person name="An J."/>
            <person name="Guo P."/>
            <person name="Yuan Y."/>
            <person name="Deng Q."/>
            <person name="Wang Y."/>
            <person name="Liu Y."/>
            <person name="Gao F."/>
            <person name="Wang J."/>
            <person name="Zaman S."/>
            <person name="Qin B."/>
            <person name="Wu G."/>
            <person name="Maxwell P.H."/>
            <person name="Xu X."/>
            <person name="Liu L."/>
            <person name="Li W."/>
            <person name="Esteban M.A."/>
        </authorList>
    </citation>
    <scope>FUNCTION</scope>
    <scope>DEVELOPMENTAL STAGE</scope>
</reference>
<reference key="5">
    <citation type="journal article" date="2022" name="Science">
        <title>Translatome and transcriptome co-profiling reveals a role of TPRXs in human zygotic genome activation.</title>
        <authorList>
            <person name="Zou Z."/>
            <person name="Zhang C."/>
            <person name="Wang Q."/>
            <person name="Hou Z."/>
            <person name="Xiong Z."/>
            <person name="Kong F."/>
            <person name="Wang Q."/>
            <person name="Song J."/>
            <person name="Liu B."/>
            <person name="Liu B."/>
            <person name="Wang L."/>
            <person name="Lai F."/>
            <person name="Fan Q."/>
            <person name="Tao W."/>
            <person name="Zhao S."/>
            <person name="Ma X."/>
            <person name="Li M."/>
            <person name="Wu K."/>
            <person name="Zhao H."/>
            <person name="Chen Z.J."/>
            <person name="Xie W."/>
        </authorList>
    </citation>
    <scope>FUNCTION</scope>
    <scope>DEVELOPMENTAL STAGE</scope>
</reference>
<name>TPRX1_HUMAN</name>
<comment type="function">
    <text evidence="3 4">Transcription factor expressed after fertilization required for zygotic genome activation (ZGA), a critical event in early embryonic development during which the developmental control passes from maternally provided mRNAs to the expression of the zygotic genome after fertilization (PubMed:35314832, PubMed:36074823). Binds and activates expression of key ZGA marker genes, such as NANOGNB, ZSCAN4, DUXB, KLF5 and DPPA3 (PubMed:36074823). Binds to regulatory DNA sequences containing a 5'-TAATCC-3' sequence motif (PubMed:36074823).</text>
</comment>
<comment type="interaction">
    <interactant intactId="EBI-14115717">
        <id>Q8N7U7-2</id>
    </interactant>
    <interactant intactId="EBI-930964">
        <id>P54253</id>
        <label>ATXN1</label>
    </interactant>
    <organismsDiffer>false</organismsDiffer>
    <experiments>3</experiments>
</comment>
<comment type="interaction">
    <interactant intactId="EBI-14115717">
        <id>Q8N7U7-2</id>
    </interactant>
    <interactant intactId="EBI-81610">
        <id>O15287</id>
        <label>FANCG</label>
    </interactant>
    <organismsDiffer>false</organismsDiffer>
    <experiments>3</experiments>
</comment>
<comment type="interaction">
    <interactant intactId="EBI-14115717">
        <id>Q8N7U7-2</id>
    </interactant>
    <interactant intactId="EBI-618309">
        <id>Q08379</id>
        <label>GOLGA2</label>
    </interactant>
    <organismsDiffer>false</organismsDiffer>
    <experiments>3</experiments>
</comment>
<comment type="interaction">
    <interactant intactId="EBI-14115717">
        <id>Q8N7U7-2</id>
    </interactant>
    <interactant intactId="EBI-5916454">
        <id>A6NEM1</id>
        <label>GOLGA6L9</label>
    </interactant>
    <organismsDiffer>false</organismsDiffer>
    <experiments>3</experiments>
</comment>
<comment type="interaction">
    <interactant intactId="EBI-14115717">
        <id>Q8N7U7-2</id>
    </interactant>
    <interactant intactId="EBI-6509505">
        <id>Q0VD86</id>
        <label>INCA1</label>
    </interactant>
    <organismsDiffer>false</organismsDiffer>
    <experiments>3</experiments>
</comment>
<comment type="interaction">
    <interactant intactId="EBI-14115717">
        <id>Q8N7U7-2</id>
    </interactant>
    <interactant intactId="EBI-10241353">
        <id>Q3SYF9</id>
        <label>KRTAP19-7</label>
    </interactant>
    <organismsDiffer>false</organismsDiffer>
    <experiments>3</experiments>
</comment>
<comment type="interaction">
    <interactant intactId="EBI-14115717">
        <id>Q8N7U7-2</id>
    </interactant>
    <interactant intactId="EBI-11962084">
        <id>Q3LI66</id>
        <label>KRTAP6-2</label>
    </interactant>
    <organismsDiffer>false</organismsDiffer>
    <experiments>3</experiments>
</comment>
<comment type="interaction">
    <interactant intactId="EBI-14115717">
        <id>Q8N7U7-2</id>
    </interactant>
    <interactant intactId="EBI-2340269">
        <id>Q13064</id>
        <label>MKRN3</label>
    </interactant>
    <organismsDiffer>false</organismsDiffer>
    <experiments>3</experiments>
</comment>
<comment type="interaction">
    <interactant intactId="EBI-14115717">
        <id>Q8N7U7-2</id>
    </interactant>
    <interactant intactId="EBI-22734860">
        <id>Q8WX92-2</id>
        <label>NELFB</label>
    </interactant>
    <organismsDiffer>false</organismsDiffer>
    <experiments>3</experiments>
</comment>
<comment type="interaction">
    <interactant intactId="EBI-14115717">
        <id>Q8N7U7-2</id>
    </interactant>
    <interactant intactId="EBI-536879">
        <id>O43482</id>
        <label>OIP5</label>
    </interactant>
    <organismsDiffer>false</organismsDiffer>
    <experiments>5</experiments>
</comment>
<comment type="interaction">
    <interactant intactId="EBI-14115717">
        <id>Q8N7U7-2</id>
    </interactant>
    <interactant intactId="EBI-12754095">
        <id>P86480</id>
        <label>PRR20D</label>
    </interactant>
    <organismsDiffer>false</organismsDiffer>
    <experiments>3</experiments>
</comment>
<comment type="interaction">
    <interactant intactId="EBI-14115717">
        <id>Q8N7U7-2</id>
    </interactant>
    <interactant intactId="EBI-748621">
        <id>Q9UJW9</id>
        <label>SERTAD3</label>
    </interactant>
    <organismsDiffer>false</organismsDiffer>
    <experiments>3</experiments>
</comment>
<comment type="interaction">
    <interactant intactId="EBI-14115717">
        <id>Q8N7U7-2</id>
    </interactant>
    <interactant intactId="EBI-739895">
        <id>Q8N6Y0</id>
        <label>USHBP1</label>
    </interactant>
    <organismsDiffer>false</organismsDiffer>
    <experiments>3</experiments>
</comment>
<comment type="interaction">
    <interactant intactId="EBI-14115717">
        <id>Q8N7U7-2</id>
    </interactant>
    <interactant intactId="EBI-2129267">
        <id>Q8WWF5</id>
        <label>ZNRF4</label>
    </interactant>
    <organismsDiffer>false</organismsDiffer>
    <experiments>3</experiments>
</comment>
<comment type="subcellular location">
    <subcellularLocation>
        <location evidence="1">Nucleus</location>
    </subcellularLocation>
</comment>
<comment type="alternative products">
    <event type="alternative splicing"/>
    <isoform>
        <id>Q8N7U7-1</id>
        <name>1</name>
        <sequence type="displayed"/>
    </isoform>
    <isoform>
        <id>Q8N7U7-2</id>
        <name>2</name>
        <sequence type="described" ref="VSP_027444"/>
    </isoform>
</comment>
<comment type="developmental stage">
    <text evidence="3 4">Specifically expressed during early development: expression starts to increase at the 4-cell (4C) stage and culminates at the 8-cell (8C) stage.</text>
</comment>
<comment type="similarity">
    <text evidence="7">Belongs to the paired homeobox family.</text>
</comment>
<comment type="online information" name="Protein Spotlight">
    <link uri="https://www.proteinspotlight.org/back_issues/256/"/>
    <text>In the beginning - Issue 256 of March 2023</text>
</comment>
<proteinExistence type="evidence at protein level"/>
<sequence length="411" mass="40603">MLSLREQQLQVWFKNRRAKLARERRLQQQPQRVPGQRGRGARAAPLVPAASASAPQRGPSGILPAAEPTICSLHQAWGGPGCRAQKGIPAALSPGPGPIPAPIPGPAQIPGPLPGSIPGPIPGPAQIPSPIPAPIPGPISGPVQIPGPFRGPIPGPISGPAPIPGPISGPFSGPNPGPIPGPNPGPIPGPISGPIPGPISVPIPGPIPGPISGPISGPNPGPIPGPIPGPISGPNPGPIPGPISGPNPGLIPGPIPGPISGPGPIIGPIPSPAQIPGPGRLQGPGPILSPGRMRSPGSLPGLAPILGPGSGPGSGSVPAPIPGPGSLPAPAPLWPQSPDASDFLPDTQLFPHFTELLLPLDPLEGSSVSTMTSQYQEGDDSMGKKHSGSQPQEEGGSVNENHSGPRLLLDL</sequence>